<proteinExistence type="evidence at protein level"/>
<comment type="function">
    <text evidence="6 7">Electroneutral antiporter that most probably mediates the transport of adenyl nucleotides through the inner mitochondrial membrane. Originally identified as an ATP-magnesium/inorganic phosphate antiporter, it could have a broader specificity for adenyl nucleotides. By regulating the mitochondrial matrix adenyl nucleotide pool could adapt to changing cellular energetic demands and indirectly regulate adenyl nucleotide-dependent metabolic pathways.</text>
</comment>
<comment type="catalytic activity">
    <reaction evidence="15">
        <text>Mg(2+)(out) + phosphate(in) + ATP(out) = Mg(2+)(in) + phosphate(out) + ATP(in)</text>
        <dbReference type="Rhea" id="RHEA:65840"/>
        <dbReference type="ChEBI" id="CHEBI:18420"/>
        <dbReference type="ChEBI" id="CHEBI:30616"/>
        <dbReference type="ChEBI" id="CHEBI:43474"/>
    </reaction>
</comment>
<comment type="activity regulation">
    <text evidence="1">Activated by an increase in cytosolic calcium levels that induce a conformational change of the N-terminal regulatory domain, uncapping the channel and allowing transport.</text>
</comment>
<comment type="subcellular location">
    <subcellularLocation>
        <location evidence="13 14">Mitochondrion inner membrane</location>
        <topology evidence="2">Multi-pass membrane protein</topology>
    </subcellularLocation>
</comment>
<comment type="alternative products">
    <event type="alternative splicing"/>
    <isoform>
        <id>Q6KCM7-1</id>
        <name>1</name>
        <name evidence="10">SCaMC-2a</name>
        <sequence type="displayed"/>
    </isoform>
    <isoform>
        <id>Q6KCM7-2</id>
        <name>2</name>
        <name evidence="10">SCaMC-2b</name>
        <sequence type="described" ref="VSP_031069"/>
    </isoform>
    <isoform>
        <id>Q6KCM7-3</id>
        <name>3</name>
        <sequence type="described" ref="VSP_031069 VSP_031070"/>
    </isoform>
    <isoform>
        <id>Q6KCM7-4</id>
        <name>4</name>
        <name evidence="10">SCaMC-2c</name>
        <sequence type="described" ref="VSP_031068"/>
    </isoform>
    <isoform>
        <id>Q6KCM7-5</id>
        <name>5</name>
        <sequence type="described" ref="VSP_031068 VSP_031070"/>
    </isoform>
    <isoform>
        <id>Q6KCM7-6</id>
        <name>6</name>
        <name evidence="10">SCaMC-2d</name>
        <sequence type="described" ref="VSP_031067"/>
    </isoform>
</comment>
<comment type="tissue specificity">
    <text evidence="5 6">Widely expressed. Expressed in fetal and adult liver, skeletal muscle, testis, ovary, hippocampus and caudate nucleus.</text>
</comment>
<comment type="tissue specificity">
    <molecule>Isoform 1</molecule>
    <text evidence="5">Expressed in all tissues tested.</text>
</comment>
<comment type="tissue specificity">
    <molecule>Isoform 2</molecule>
    <text evidence="5">Expression is restricted to kidney and lung.</text>
</comment>
<comment type="domain">
    <text evidence="1">The regulatory N-terminal domain/NTD, binds calcium in the mitochondrial intermembrane space and regulates the antiporter activity of the transmembrane domain/TMD. In absence of calcium, the apo form of the N-terminal domain is intrinsically disordered and binds to the transmembrane domain, inhibiting the transporter activity. Binding of calcium leads to a major conformational change and abolishes the interaction with the transmembrane domain and the inhibition of the transporter activity.</text>
</comment>
<comment type="domain">
    <text evidence="1">The C-terminal mitochondrial carrier domain/transmembrane domain/TMD bears the transmembrane transporter activity.</text>
</comment>
<comment type="domain">
    <text evidence="1">Linker region/H9 could directly block the transport of substrates across the transporter.</text>
</comment>
<comment type="similarity">
    <text evidence="12">Belongs to the mitochondrial carrier (TC 2.A.29) family.</text>
</comment>
<comment type="sequence caution" evidence="12">
    <conflict type="erroneous initiation">
        <sequence resource="EMBL-CDS" id="BAB67789"/>
    </conflict>
</comment>
<dbReference type="EMBL" id="AJ619989">
    <property type="protein sequence ID" value="CAF04495.1"/>
    <property type="molecule type" value="mRNA"/>
</dbReference>
<dbReference type="EMBL" id="AJ619990">
    <property type="protein sequence ID" value="CAF04496.1"/>
    <property type="molecule type" value="mRNA"/>
</dbReference>
<dbReference type="EMBL" id="AJ619991">
    <property type="protein sequence ID" value="CAF04497.1"/>
    <property type="molecule type" value="mRNA"/>
</dbReference>
<dbReference type="EMBL" id="AJ619992">
    <property type="protein sequence ID" value="CAF04498.1"/>
    <property type="molecule type" value="mRNA"/>
</dbReference>
<dbReference type="EMBL" id="AJ619963">
    <property type="protein sequence ID" value="CAF04060.1"/>
    <property type="molecule type" value="mRNA"/>
</dbReference>
<dbReference type="EMBL" id="AB067483">
    <property type="protein sequence ID" value="BAB67789.1"/>
    <property type="status" value="ALT_INIT"/>
    <property type="molecule type" value="mRNA"/>
</dbReference>
<dbReference type="EMBL" id="AY358515">
    <property type="protein sequence ID" value="AAQ88879.1"/>
    <property type="molecule type" value="mRNA"/>
</dbReference>
<dbReference type="EMBL" id="AK290705">
    <property type="protein sequence ID" value="BAF83394.1"/>
    <property type="molecule type" value="mRNA"/>
</dbReference>
<dbReference type="EMBL" id="AK290991">
    <property type="protein sequence ID" value="BAF83680.1"/>
    <property type="molecule type" value="mRNA"/>
</dbReference>
<dbReference type="EMBL" id="CH471090">
    <property type="protein sequence ID" value="EAW87739.1"/>
    <property type="molecule type" value="Genomic_DNA"/>
</dbReference>
<dbReference type="EMBL" id="AL360268">
    <property type="status" value="NOT_ANNOTATED_CDS"/>
    <property type="molecule type" value="Genomic_DNA"/>
</dbReference>
<dbReference type="EMBL" id="AL590708">
    <property type="status" value="NOT_ANNOTATED_CDS"/>
    <property type="molecule type" value="Genomic_DNA"/>
</dbReference>
<dbReference type="EMBL" id="BC005163">
    <property type="protein sequence ID" value="AAH05163.2"/>
    <property type="molecule type" value="mRNA"/>
</dbReference>
<dbReference type="EMBL" id="BC089448">
    <property type="protein sequence ID" value="AAH89448.1"/>
    <property type="molecule type" value="mRNA"/>
</dbReference>
<dbReference type="EMBL" id="BC103930">
    <property type="protein sequence ID" value="AAI03931.1"/>
    <property type="molecule type" value="mRNA"/>
</dbReference>
<dbReference type="EMBL" id="BC103931">
    <property type="protein sequence ID" value="AAI03932.1"/>
    <property type="molecule type" value="mRNA"/>
</dbReference>
<dbReference type="EMBL" id="BC103932">
    <property type="protein sequence ID" value="AAI03933.1"/>
    <property type="molecule type" value="mRNA"/>
</dbReference>
<dbReference type="EMBL" id="BC103933">
    <property type="protein sequence ID" value="AAI03934.1"/>
    <property type="molecule type" value="mRNA"/>
</dbReference>
<dbReference type="CCDS" id="CCDS35151.1">
    <molecule id="Q6KCM7-2"/>
</dbReference>
<dbReference type="CCDS" id="CCDS48031.1">
    <molecule id="Q6KCM7-4"/>
</dbReference>
<dbReference type="CCDS" id="CCDS59146.1">
    <molecule id="Q6KCM7-5"/>
</dbReference>
<dbReference type="CCDS" id="CCDS6890.1">
    <molecule id="Q6KCM7-1"/>
</dbReference>
<dbReference type="CCDS" id="CCDS83420.1">
    <molecule id="Q6KCM7-3"/>
</dbReference>
<dbReference type="RefSeq" id="NP_001006642.1">
    <molecule id="Q6KCM7-2"/>
    <property type="nucleotide sequence ID" value="NM_001006641.4"/>
</dbReference>
<dbReference type="RefSeq" id="NP_001006643.1">
    <molecule id="Q6KCM7-4"/>
    <property type="nucleotide sequence ID" value="NM_001006642.4"/>
</dbReference>
<dbReference type="RefSeq" id="NP_001252543.1">
    <molecule id="Q6KCM7-5"/>
    <property type="nucleotide sequence ID" value="NM_001265614.3"/>
</dbReference>
<dbReference type="RefSeq" id="NP_001317917.1">
    <molecule id="Q6KCM7-3"/>
    <property type="nucleotide sequence ID" value="NM_001330988.2"/>
</dbReference>
<dbReference type="RefSeq" id="NP_443133.2">
    <molecule id="Q6KCM7-1"/>
    <property type="nucleotide sequence ID" value="NM_052901.5"/>
</dbReference>
<dbReference type="RefSeq" id="XP_005251746.1">
    <property type="nucleotide sequence ID" value="XM_005251689.4"/>
</dbReference>
<dbReference type="SMR" id="Q6KCM7"/>
<dbReference type="BioGRID" id="125351">
    <property type="interactions" value="63"/>
</dbReference>
<dbReference type="FunCoup" id="Q6KCM7">
    <property type="interactions" value="1873"/>
</dbReference>
<dbReference type="IntAct" id="Q6KCM7">
    <property type="interactions" value="36"/>
</dbReference>
<dbReference type="MINT" id="Q6KCM7"/>
<dbReference type="STRING" id="9606.ENSP00000362160"/>
<dbReference type="TCDB" id="2.A.29.23.1">
    <property type="family name" value="the mitochondrial carrier (mc) family"/>
</dbReference>
<dbReference type="iPTMnet" id="Q6KCM7"/>
<dbReference type="PhosphoSitePlus" id="Q6KCM7"/>
<dbReference type="SwissPalm" id="Q6KCM7"/>
<dbReference type="BioMuta" id="SLC25A25"/>
<dbReference type="DMDM" id="74758042"/>
<dbReference type="jPOST" id="Q6KCM7"/>
<dbReference type="MassIVE" id="Q6KCM7"/>
<dbReference type="PaxDb" id="9606-ENSP00000362159"/>
<dbReference type="PeptideAtlas" id="Q6KCM7"/>
<dbReference type="ProteomicsDB" id="66541">
    <molecule id="Q6KCM7-1"/>
</dbReference>
<dbReference type="ProteomicsDB" id="66542">
    <molecule id="Q6KCM7-2"/>
</dbReference>
<dbReference type="ProteomicsDB" id="66543">
    <molecule id="Q6KCM7-3"/>
</dbReference>
<dbReference type="ProteomicsDB" id="66544">
    <molecule id="Q6KCM7-4"/>
</dbReference>
<dbReference type="ProteomicsDB" id="66545">
    <molecule id="Q6KCM7-5"/>
</dbReference>
<dbReference type="ProteomicsDB" id="66546">
    <molecule id="Q6KCM7-6"/>
</dbReference>
<dbReference type="Pumba" id="Q6KCM7"/>
<dbReference type="Antibodypedia" id="17304">
    <property type="antibodies" value="144 antibodies from 22 providers"/>
</dbReference>
<dbReference type="DNASU" id="114789"/>
<dbReference type="Ensembl" id="ENST00000373064.9">
    <molecule id="Q6KCM7-1"/>
    <property type="protein sequence ID" value="ENSP00000362155.5"/>
    <property type="gene ID" value="ENSG00000148339.13"/>
</dbReference>
<dbReference type="Ensembl" id="ENST00000373066.9">
    <molecule id="Q6KCM7-5"/>
    <property type="protein sequence ID" value="ENSP00000362157.5"/>
    <property type="gene ID" value="ENSG00000148339.13"/>
</dbReference>
<dbReference type="Ensembl" id="ENST00000373068.6">
    <molecule id="Q6KCM7-2"/>
    <property type="protein sequence ID" value="ENSP00000362159.2"/>
    <property type="gene ID" value="ENSG00000148339.13"/>
</dbReference>
<dbReference type="Ensembl" id="ENST00000373069.10">
    <molecule id="Q6KCM7-3"/>
    <property type="protein sequence ID" value="ENSP00000362160.5"/>
    <property type="gene ID" value="ENSG00000148339.13"/>
</dbReference>
<dbReference type="Ensembl" id="ENST00000432073.6">
    <molecule id="Q6KCM7-4"/>
    <property type="protein sequence ID" value="ENSP00000410053.2"/>
    <property type="gene ID" value="ENSG00000148339.13"/>
</dbReference>
<dbReference type="GeneID" id="114789"/>
<dbReference type="KEGG" id="hsa:114789"/>
<dbReference type="MANE-Select" id="ENST00000373069.10">
    <molecule id="Q6KCM7-3"/>
    <property type="protein sequence ID" value="ENSP00000362160.5"/>
    <property type="RefSeq nucleotide sequence ID" value="NM_001330988.2"/>
    <property type="RefSeq protein sequence ID" value="NP_001317917.1"/>
</dbReference>
<dbReference type="UCSC" id="uc004btb.5">
    <molecule id="Q6KCM7-1"/>
    <property type="organism name" value="human"/>
</dbReference>
<dbReference type="AGR" id="HGNC:20663"/>
<dbReference type="CTD" id="114789"/>
<dbReference type="DisGeNET" id="114789"/>
<dbReference type="GeneCards" id="SLC25A25"/>
<dbReference type="HGNC" id="HGNC:20663">
    <property type="gene designation" value="SLC25A25"/>
</dbReference>
<dbReference type="HPA" id="ENSG00000148339">
    <property type="expression patterns" value="Tissue enhanced (liver)"/>
</dbReference>
<dbReference type="MalaCards" id="SLC25A25"/>
<dbReference type="MIM" id="608745">
    <property type="type" value="gene"/>
</dbReference>
<dbReference type="neXtProt" id="NX_Q6KCM7"/>
<dbReference type="OpenTargets" id="ENSG00000148339"/>
<dbReference type="PharmGKB" id="PA134952319"/>
<dbReference type="VEuPathDB" id="HostDB:ENSG00000148339"/>
<dbReference type="eggNOG" id="KOG0036">
    <property type="taxonomic scope" value="Eukaryota"/>
</dbReference>
<dbReference type="GeneTree" id="ENSGT00940000157207"/>
<dbReference type="HOGENOM" id="CLU_015166_2_0_1"/>
<dbReference type="InParanoid" id="Q6KCM7"/>
<dbReference type="OMA" id="VISYAEW"/>
<dbReference type="OrthoDB" id="270584at2759"/>
<dbReference type="PAN-GO" id="Q6KCM7">
    <property type="GO annotations" value="1 GO annotation based on evolutionary models"/>
</dbReference>
<dbReference type="PhylomeDB" id="Q6KCM7"/>
<dbReference type="TreeFam" id="TF313492"/>
<dbReference type="PathwayCommons" id="Q6KCM7"/>
<dbReference type="SignaLink" id="Q6KCM7"/>
<dbReference type="BioGRID-ORCS" id="114789">
    <property type="hits" value="53 hits in 1156 CRISPR screens"/>
</dbReference>
<dbReference type="ChiTaRS" id="SLC25A25">
    <property type="organism name" value="human"/>
</dbReference>
<dbReference type="GenomeRNAi" id="114789"/>
<dbReference type="Pharos" id="Q6KCM7">
    <property type="development level" value="Tbio"/>
</dbReference>
<dbReference type="PRO" id="PR:Q6KCM7"/>
<dbReference type="Proteomes" id="UP000005640">
    <property type="component" value="Chromosome 9"/>
</dbReference>
<dbReference type="RNAct" id="Q6KCM7">
    <property type="molecule type" value="protein"/>
</dbReference>
<dbReference type="Bgee" id="ENSG00000148339">
    <property type="expression patterns" value="Expressed in mucosa of stomach and 186 other cell types or tissues"/>
</dbReference>
<dbReference type="ExpressionAtlas" id="Q6KCM7">
    <property type="expression patterns" value="baseline and differential"/>
</dbReference>
<dbReference type="GO" id="GO:0005743">
    <property type="term" value="C:mitochondrial inner membrane"/>
    <property type="evidence" value="ECO:0007669"/>
    <property type="project" value="UniProtKB-SubCell"/>
</dbReference>
<dbReference type="GO" id="GO:0005739">
    <property type="term" value="C:mitochondrion"/>
    <property type="evidence" value="ECO:0000314"/>
    <property type="project" value="UniProtKB"/>
</dbReference>
<dbReference type="GO" id="GO:0005347">
    <property type="term" value="F:ATP transmembrane transporter activity"/>
    <property type="evidence" value="ECO:0000318"/>
    <property type="project" value="GO_Central"/>
</dbReference>
<dbReference type="GO" id="GO:0140987">
    <property type="term" value="F:ATP:phosphate antiporter activity"/>
    <property type="evidence" value="ECO:0000314"/>
    <property type="project" value="UniProtKB"/>
</dbReference>
<dbReference type="GO" id="GO:0005509">
    <property type="term" value="F:calcium ion binding"/>
    <property type="evidence" value="ECO:0007669"/>
    <property type="project" value="InterPro"/>
</dbReference>
<dbReference type="GO" id="GO:0060612">
    <property type="term" value="P:adipose tissue development"/>
    <property type="evidence" value="ECO:0007669"/>
    <property type="project" value="Ensembl"/>
</dbReference>
<dbReference type="GO" id="GO:0015866">
    <property type="term" value="P:ADP transport"/>
    <property type="evidence" value="ECO:0000318"/>
    <property type="project" value="GO_Central"/>
</dbReference>
<dbReference type="GO" id="GO:0046034">
    <property type="term" value="P:ATP metabolic process"/>
    <property type="evidence" value="ECO:0007669"/>
    <property type="project" value="Ensembl"/>
</dbReference>
<dbReference type="GO" id="GO:0015867">
    <property type="term" value="P:ATP transport"/>
    <property type="evidence" value="ECO:0000318"/>
    <property type="project" value="GO_Central"/>
</dbReference>
<dbReference type="GO" id="GO:0070588">
    <property type="term" value="P:calcium ion transmembrane transport"/>
    <property type="evidence" value="ECO:0007669"/>
    <property type="project" value="Ensembl"/>
</dbReference>
<dbReference type="GO" id="GO:0043010">
    <property type="term" value="P:camera-type eye development"/>
    <property type="evidence" value="ECO:0007669"/>
    <property type="project" value="Ensembl"/>
</dbReference>
<dbReference type="GO" id="GO:0045333">
    <property type="term" value="P:cellular respiration"/>
    <property type="evidence" value="ECO:0007669"/>
    <property type="project" value="Ensembl"/>
</dbReference>
<dbReference type="GO" id="GO:0035264">
    <property type="term" value="P:multicellular organism growth"/>
    <property type="evidence" value="ECO:0007669"/>
    <property type="project" value="Ensembl"/>
</dbReference>
<dbReference type="GO" id="GO:0014823">
    <property type="term" value="P:response to activity"/>
    <property type="evidence" value="ECO:0007669"/>
    <property type="project" value="Ensembl"/>
</dbReference>
<dbReference type="GO" id="GO:0002021">
    <property type="term" value="P:response to dietary excess"/>
    <property type="evidence" value="ECO:0007669"/>
    <property type="project" value="Ensembl"/>
</dbReference>
<dbReference type="GO" id="GO:0032094">
    <property type="term" value="P:response to food"/>
    <property type="evidence" value="ECO:0007669"/>
    <property type="project" value="Ensembl"/>
</dbReference>
<dbReference type="FunFam" id="1.10.238.10:FF:000098">
    <property type="entry name" value="calcium-binding mitochondrial carrier protein SCaMC-2 isoform X1"/>
    <property type="match status" value="1"/>
</dbReference>
<dbReference type="FunFam" id="1.10.238.10:FF:000028">
    <property type="entry name" value="Putative calcium-binding mitochondrial carrier protein scamc-2"/>
    <property type="match status" value="1"/>
</dbReference>
<dbReference type="FunFam" id="1.50.40.10:FF:000003">
    <property type="entry name" value="Putative calcium-binding mitochondrial carrier protein scamc-2"/>
    <property type="match status" value="1"/>
</dbReference>
<dbReference type="Gene3D" id="1.10.238.10">
    <property type="entry name" value="EF-hand"/>
    <property type="match status" value="2"/>
</dbReference>
<dbReference type="Gene3D" id="1.50.40.10">
    <property type="entry name" value="Mitochondrial carrier domain"/>
    <property type="match status" value="1"/>
</dbReference>
<dbReference type="InterPro" id="IPR011992">
    <property type="entry name" value="EF-hand-dom_pair"/>
</dbReference>
<dbReference type="InterPro" id="IPR002048">
    <property type="entry name" value="EF_hand_dom"/>
</dbReference>
<dbReference type="InterPro" id="IPR002167">
    <property type="entry name" value="GDC-like"/>
</dbReference>
<dbReference type="InterPro" id="IPR002067">
    <property type="entry name" value="Mit_carrier"/>
</dbReference>
<dbReference type="InterPro" id="IPR018108">
    <property type="entry name" value="Mitochondrial_sb/sol_carrier"/>
</dbReference>
<dbReference type="InterPro" id="IPR023395">
    <property type="entry name" value="Mt_carrier_dom_sf"/>
</dbReference>
<dbReference type="PANTHER" id="PTHR24089">
    <property type="entry name" value="SOLUTE CARRIER FAMILY 25"/>
    <property type="match status" value="1"/>
</dbReference>
<dbReference type="Pfam" id="PF13499">
    <property type="entry name" value="EF-hand_7"/>
    <property type="match status" value="1"/>
</dbReference>
<dbReference type="Pfam" id="PF13833">
    <property type="entry name" value="EF-hand_8"/>
    <property type="match status" value="1"/>
</dbReference>
<dbReference type="Pfam" id="PF00153">
    <property type="entry name" value="Mito_carr"/>
    <property type="match status" value="3"/>
</dbReference>
<dbReference type="PRINTS" id="PR00928">
    <property type="entry name" value="GRAVESDC"/>
</dbReference>
<dbReference type="PRINTS" id="PR00926">
    <property type="entry name" value="MITOCARRIER"/>
</dbReference>
<dbReference type="SMART" id="SM00054">
    <property type="entry name" value="EFh"/>
    <property type="match status" value="3"/>
</dbReference>
<dbReference type="SUPFAM" id="SSF47473">
    <property type="entry name" value="EF-hand"/>
    <property type="match status" value="1"/>
</dbReference>
<dbReference type="SUPFAM" id="SSF103506">
    <property type="entry name" value="Mitochondrial carrier"/>
    <property type="match status" value="1"/>
</dbReference>
<dbReference type="PROSITE" id="PS50222">
    <property type="entry name" value="EF_HAND_2"/>
    <property type="match status" value="3"/>
</dbReference>
<dbReference type="PROSITE" id="PS50920">
    <property type="entry name" value="SOLCAR"/>
    <property type="match status" value="3"/>
</dbReference>
<sequence>MLCLCLYVPVIGEAQTEFQYFESKGLPAELKSIFKLSVFIPSQEFSTYRQWKQKIVQAGDKDLDGQLDFEEFVHYLQDHEKKLRLVFKSLDKKNDGRIDAQEIMQSLRDLGVKISEQQAEKILKSMDKNGTMTIDWNEWRDYHLLHPVENIPEIILYWKHSTIFDVGENLTVPDEFTVEERQTGMWWRHLVAGGGAGAVSRTCTAPLDRLKVLMQVHASRSNNMGIVGGFTQMIREGGARSLWRGNGINVLKIAPESAIKFMAYEQIKRLVGSDQETLRIHERLVAGSLAGAIAQSSIYPMEVLKTRMALRKTGQYSGMLDCARRILAREGVAAFYKGYVPNMLGIIPYAGIDLAVYETLKNAWLQHYAVNSADPGVFVLLACGTMSSTCGQLASYPLALVRTRMQAQASIEGAPEVTMSSLFKHILRTEGAFGLYRGLAPNFMKVIPAVSISYVVYENLKITLGVQSR</sequence>
<gene>
    <name evidence="17" type="primary">SLC25A25</name>
    <name evidence="11" type="synonym">APC3</name>
    <name evidence="16" type="synonym">KIAA1896</name>
    <name type="synonym">MCSC3</name>
    <name evidence="10" type="synonym">SCAMC2</name>
    <name type="ORF">UNQ549/PRO1106</name>
</gene>
<organism>
    <name type="scientific">Homo sapiens</name>
    <name type="common">Human</name>
    <dbReference type="NCBI Taxonomy" id="9606"/>
    <lineage>
        <taxon>Eukaryota</taxon>
        <taxon>Metazoa</taxon>
        <taxon>Chordata</taxon>
        <taxon>Craniata</taxon>
        <taxon>Vertebrata</taxon>
        <taxon>Euteleostomi</taxon>
        <taxon>Mammalia</taxon>
        <taxon>Eutheria</taxon>
        <taxon>Euarchontoglires</taxon>
        <taxon>Primates</taxon>
        <taxon>Haplorrhini</taxon>
        <taxon>Catarrhini</taxon>
        <taxon>Hominidae</taxon>
        <taxon>Homo</taxon>
    </lineage>
</organism>
<reference key="1">
    <citation type="journal article" date="2004" name="J. Biol. Chem.">
        <title>Identification of a novel human subfamily of mitochondrial carriers with calcium-binding domains.</title>
        <authorList>
            <person name="del Arco A."/>
            <person name="Satrustegui J."/>
        </authorList>
    </citation>
    <scope>NUCLEOTIDE SEQUENCE [MRNA] (ISOFORMS 1; 2; 4 AND 6)</scope>
    <scope>SUBCELLULAR LOCATION</scope>
    <scope>TISSUE SPECIFICITY (ISOFORMS 1 AND 2)</scope>
</reference>
<reference key="2">
    <citation type="journal article" date="2004" name="J. Biol. Chem.">
        <title>Identification of the mitochondrial ATP-Mg/Pi transporter. Bacterial expression, reconstitution, functional characterization, and tissue distribution.</title>
        <authorList>
            <person name="Fiermonte G."/>
            <person name="De Leonardis F."/>
            <person name="Todisco S."/>
            <person name="Palmieri L."/>
            <person name="Lasorsa F.M."/>
            <person name="Palmieri F."/>
        </authorList>
    </citation>
    <scope>NUCLEOTIDE SEQUENCE [MRNA] (ISOFORM 4)</scope>
    <scope>FUNCTION</scope>
    <scope>SUBCELLULAR LOCATION</scope>
    <scope>TOPOLOGY</scope>
    <scope>TISSUE SPECIFICITY</scope>
    <source>
        <tissue>Brain</tissue>
    </source>
</reference>
<reference key="3">
    <citation type="journal article" date="2001" name="DNA Res.">
        <title>Prediction of the coding sequences of unidentified human genes. XXI. The complete sequences of 60 new cDNA clones from brain which code for large proteins.</title>
        <authorList>
            <person name="Nagase T."/>
            <person name="Kikuno R."/>
            <person name="Ohara O."/>
        </authorList>
    </citation>
    <scope>NUCLEOTIDE SEQUENCE [LARGE SCALE MRNA] (ISOFORM 5)</scope>
    <source>
        <tissue>Brain</tissue>
    </source>
</reference>
<reference key="4">
    <citation type="journal article" date="2003" name="Genome Res.">
        <title>The secreted protein discovery initiative (SPDI), a large-scale effort to identify novel human secreted and transmembrane proteins: a bioinformatics assessment.</title>
        <authorList>
            <person name="Clark H.F."/>
            <person name="Gurney A.L."/>
            <person name="Abaya E."/>
            <person name="Baker K."/>
            <person name="Baldwin D.T."/>
            <person name="Brush J."/>
            <person name="Chen J."/>
            <person name="Chow B."/>
            <person name="Chui C."/>
            <person name="Crowley C."/>
            <person name="Currell B."/>
            <person name="Deuel B."/>
            <person name="Dowd P."/>
            <person name="Eaton D."/>
            <person name="Foster J.S."/>
            <person name="Grimaldi C."/>
            <person name="Gu Q."/>
            <person name="Hass P.E."/>
            <person name="Heldens S."/>
            <person name="Huang A."/>
            <person name="Kim H.S."/>
            <person name="Klimowski L."/>
            <person name="Jin Y."/>
            <person name="Johnson S."/>
            <person name="Lee J."/>
            <person name="Lewis L."/>
            <person name="Liao D."/>
            <person name="Mark M.R."/>
            <person name="Robbie E."/>
            <person name="Sanchez C."/>
            <person name="Schoenfeld J."/>
            <person name="Seshagiri S."/>
            <person name="Simmons L."/>
            <person name="Singh J."/>
            <person name="Smith V."/>
            <person name="Stinson J."/>
            <person name="Vagts A."/>
            <person name="Vandlen R.L."/>
            <person name="Watanabe C."/>
            <person name="Wieand D."/>
            <person name="Woods K."/>
            <person name="Xie M.-H."/>
            <person name="Yansura D.G."/>
            <person name="Yi S."/>
            <person name="Yu G."/>
            <person name="Yuan J."/>
            <person name="Zhang M."/>
            <person name="Zhang Z."/>
            <person name="Goddard A.D."/>
            <person name="Wood W.I."/>
            <person name="Godowski P.J."/>
            <person name="Gray A.M."/>
        </authorList>
    </citation>
    <scope>NUCLEOTIDE SEQUENCE [LARGE SCALE MRNA] (ISOFORM 1)</scope>
</reference>
<reference key="5">
    <citation type="journal article" date="2004" name="Nat. Genet.">
        <title>Complete sequencing and characterization of 21,243 full-length human cDNAs.</title>
        <authorList>
            <person name="Ota T."/>
            <person name="Suzuki Y."/>
            <person name="Nishikawa T."/>
            <person name="Otsuki T."/>
            <person name="Sugiyama T."/>
            <person name="Irie R."/>
            <person name="Wakamatsu A."/>
            <person name="Hayashi K."/>
            <person name="Sato H."/>
            <person name="Nagai K."/>
            <person name="Kimura K."/>
            <person name="Makita H."/>
            <person name="Sekine M."/>
            <person name="Obayashi M."/>
            <person name="Nishi T."/>
            <person name="Shibahara T."/>
            <person name="Tanaka T."/>
            <person name="Ishii S."/>
            <person name="Yamamoto J."/>
            <person name="Saito K."/>
            <person name="Kawai Y."/>
            <person name="Isono Y."/>
            <person name="Nakamura Y."/>
            <person name="Nagahari K."/>
            <person name="Murakami K."/>
            <person name="Yasuda T."/>
            <person name="Iwayanagi T."/>
            <person name="Wagatsuma M."/>
            <person name="Shiratori A."/>
            <person name="Sudo H."/>
            <person name="Hosoiri T."/>
            <person name="Kaku Y."/>
            <person name="Kodaira H."/>
            <person name="Kondo H."/>
            <person name="Sugawara M."/>
            <person name="Takahashi M."/>
            <person name="Kanda K."/>
            <person name="Yokoi T."/>
            <person name="Furuya T."/>
            <person name="Kikkawa E."/>
            <person name="Omura Y."/>
            <person name="Abe K."/>
            <person name="Kamihara K."/>
            <person name="Katsuta N."/>
            <person name="Sato K."/>
            <person name="Tanikawa M."/>
            <person name="Yamazaki M."/>
            <person name="Ninomiya K."/>
            <person name="Ishibashi T."/>
            <person name="Yamashita H."/>
            <person name="Murakawa K."/>
            <person name="Fujimori K."/>
            <person name="Tanai H."/>
            <person name="Kimata M."/>
            <person name="Watanabe M."/>
            <person name="Hiraoka S."/>
            <person name="Chiba Y."/>
            <person name="Ishida S."/>
            <person name="Ono Y."/>
            <person name="Takiguchi S."/>
            <person name="Watanabe S."/>
            <person name="Yosida M."/>
            <person name="Hotuta T."/>
            <person name="Kusano J."/>
            <person name="Kanehori K."/>
            <person name="Takahashi-Fujii A."/>
            <person name="Hara H."/>
            <person name="Tanase T.-O."/>
            <person name="Nomura Y."/>
            <person name="Togiya S."/>
            <person name="Komai F."/>
            <person name="Hara R."/>
            <person name="Takeuchi K."/>
            <person name="Arita M."/>
            <person name="Imose N."/>
            <person name="Musashino K."/>
            <person name="Yuuki H."/>
            <person name="Oshima A."/>
            <person name="Sasaki N."/>
            <person name="Aotsuka S."/>
            <person name="Yoshikawa Y."/>
            <person name="Matsunawa H."/>
            <person name="Ichihara T."/>
            <person name="Shiohata N."/>
            <person name="Sano S."/>
            <person name="Moriya S."/>
            <person name="Momiyama H."/>
            <person name="Satoh N."/>
            <person name="Takami S."/>
            <person name="Terashima Y."/>
            <person name="Suzuki O."/>
            <person name="Nakagawa S."/>
            <person name="Senoh A."/>
            <person name="Mizoguchi H."/>
            <person name="Goto Y."/>
            <person name="Shimizu F."/>
            <person name="Wakebe H."/>
            <person name="Hishigaki H."/>
            <person name="Watanabe T."/>
            <person name="Sugiyama A."/>
            <person name="Takemoto M."/>
            <person name="Kawakami B."/>
            <person name="Yamazaki M."/>
            <person name="Watanabe K."/>
            <person name="Kumagai A."/>
            <person name="Itakura S."/>
            <person name="Fukuzumi Y."/>
            <person name="Fujimori Y."/>
            <person name="Komiyama M."/>
            <person name="Tashiro H."/>
            <person name="Tanigami A."/>
            <person name="Fujiwara T."/>
            <person name="Ono T."/>
            <person name="Yamada K."/>
            <person name="Fujii Y."/>
            <person name="Ozaki K."/>
            <person name="Hirao M."/>
            <person name="Ohmori Y."/>
            <person name="Kawabata A."/>
            <person name="Hikiji T."/>
            <person name="Kobatake N."/>
            <person name="Inagaki H."/>
            <person name="Ikema Y."/>
            <person name="Okamoto S."/>
            <person name="Okitani R."/>
            <person name="Kawakami T."/>
            <person name="Noguchi S."/>
            <person name="Itoh T."/>
            <person name="Shigeta K."/>
            <person name="Senba T."/>
            <person name="Matsumura K."/>
            <person name="Nakajima Y."/>
            <person name="Mizuno T."/>
            <person name="Morinaga M."/>
            <person name="Sasaki M."/>
            <person name="Togashi T."/>
            <person name="Oyama M."/>
            <person name="Hata H."/>
            <person name="Watanabe M."/>
            <person name="Komatsu T."/>
            <person name="Mizushima-Sugano J."/>
            <person name="Satoh T."/>
            <person name="Shirai Y."/>
            <person name="Takahashi Y."/>
            <person name="Nakagawa K."/>
            <person name="Okumura K."/>
            <person name="Nagase T."/>
            <person name="Nomura N."/>
            <person name="Kikuchi H."/>
            <person name="Masuho Y."/>
            <person name="Yamashita R."/>
            <person name="Nakai K."/>
            <person name="Yada T."/>
            <person name="Nakamura Y."/>
            <person name="Ohara O."/>
            <person name="Isogai T."/>
            <person name="Sugano S."/>
        </authorList>
    </citation>
    <scope>NUCLEOTIDE SEQUENCE [LARGE SCALE MRNA] (ISOFORMS 1 AND 2)</scope>
    <source>
        <tissue>Lung</tissue>
        <tissue>Teratocarcinoma</tissue>
    </source>
</reference>
<reference key="6">
    <citation type="journal article" date="2004" name="Nature">
        <title>DNA sequence and analysis of human chromosome 9.</title>
        <authorList>
            <person name="Humphray S.J."/>
            <person name="Oliver K."/>
            <person name="Hunt A.R."/>
            <person name="Plumb R.W."/>
            <person name="Loveland J.E."/>
            <person name="Howe K.L."/>
            <person name="Andrews T.D."/>
            <person name="Searle S."/>
            <person name="Hunt S.E."/>
            <person name="Scott C.E."/>
            <person name="Jones M.C."/>
            <person name="Ainscough R."/>
            <person name="Almeida J.P."/>
            <person name="Ambrose K.D."/>
            <person name="Ashwell R.I.S."/>
            <person name="Babbage A.K."/>
            <person name="Babbage S."/>
            <person name="Bagguley C.L."/>
            <person name="Bailey J."/>
            <person name="Banerjee R."/>
            <person name="Barker D.J."/>
            <person name="Barlow K.F."/>
            <person name="Bates K."/>
            <person name="Beasley H."/>
            <person name="Beasley O."/>
            <person name="Bird C.P."/>
            <person name="Bray-Allen S."/>
            <person name="Brown A.J."/>
            <person name="Brown J.Y."/>
            <person name="Burford D."/>
            <person name="Burrill W."/>
            <person name="Burton J."/>
            <person name="Carder C."/>
            <person name="Carter N.P."/>
            <person name="Chapman J.C."/>
            <person name="Chen Y."/>
            <person name="Clarke G."/>
            <person name="Clark S.Y."/>
            <person name="Clee C.M."/>
            <person name="Clegg S."/>
            <person name="Collier R.E."/>
            <person name="Corby N."/>
            <person name="Crosier M."/>
            <person name="Cummings A.T."/>
            <person name="Davies J."/>
            <person name="Dhami P."/>
            <person name="Dunn M."/>
            <person name="Dutta I."/>
            <person name="Dyer L.W."/>
            <person name="Earthrowl M.E."/>
            <person name="Faulkner L."/>
            <person name="Fleming C.J."/>
            <person name="Frankish A."/>
            <person name="Frankland J.A."/>
            <person name="French L."/>
            <person name="Fricker D.G."/>
            <person name="Garner P."/>
            <person name="Garnett J."/>
            <person name="Ghori J."/>
            <person name="Gilbert J.G.R."/>
            <person name="Glison C."/>
            <person name="Grafham D.V."/>
            <person name="Gribble S."/>
            <person name="Griffiths C."/>
            <person name="Griffiths-Jones S."/>
            <person name="Grocock R."/>
            <person name="Guy J."/>
            <person name="Hall R.E."/>
            <person name="Hammond S."/>
            <person name="Harley J.L."/>
            <person name="Harrison E.S.I."/>
            <person name="Hart E.A."/>
            <person name="Heath P.D."/>
            <person name="Henderson C.D."/>
            <person name="Hopkins B.L."/>
            <person name="Howard P.J."/>
            <person name="Howden P.J."/>
            <person name="Huckle E."/>
            <person name="Johnson C."/>
            <person name="Johnson D."/>
            <person name="Joy A.A."/>
            <person name="Kay M."/>
            <person name="Keenan S."/>
            <person name="Kershaw J.K."/>
            <person name="Kimberley A.M."/>
            <person name="King A."/>
            <person name="Knights A."/>
            <person name="Laird G.K."/>
            <person name="Langford C."/>
            <person name="Lawlor S."/>
            <person name="Leongamornlert D.A."/>
            <person name="Leversha M."/>
            <person name="Lloyd C."/>
            <person name="Lloyd D.M."/>
            <person name="Lovell J."/>
            <person name="Martin S."/>
            <person name="Mashreghi-Mohammadi M."/>
            <person name="Matthews L."/>
            <person name="McLaren S."/>
            <person name="McLay K.E."/>
            <person name="McMurray A."/>
            <person name="Milne S."/>
            <person name="Nickerson T."/>
            <person name="Nisbett J."/>
            <person name="Nordsiek G."/>
            <person name="Pearce A.V."/>
            <person name="Peck A.I."/>
            <person name="Porter K.M."/>
            <person name="Pandian R."/>
            <person name="Pelan S."/>
            <person name="Phillimore B."/>
            <person name="Povey S."/>
            <person name="Ramsey Y."/>
            <person name="Rand V."/>
            <person name="Scharfe M."/>
            <person name="Sehra H.K."/>
            <person name="Shownkeen R."/>
            <person name="Sims S.K."/>
            <person name="Skuce C.D."/>
            <person name="Smith M."/>
            <person name="Steward C.A."/>
            <person name="Swarbreck D."/>
            <person name="Sycamore N."/>
            <person name="Tester J."/>
            <person name="Thorpe A."/>
            <person name="Tracey A."/>
            <person name="Tromans A."/>
            <person name="Thomas D.W."/>
            <person name="Wall M."/>
            <person name="Wallis J.M."/>
            <person name="West A.P."/>
            <person name="Whitehead S.L."/>
            <person name="Willey D.L."/>
            <person name="Williams S.A."/>
            <person name="Wilming L."/>
            <person name="Wray P.W."/>
            <person name="Young L."/>
            <person name="Ashurst J.L."/>
            <person name="Coulson A."/>
            <person name="Blocker H."/>
            <person name="Durbin R.M."/>
            <person name="Sulston J.E."/>
            <person name="Hubbard T."/>
            <person name="Jackson M.J."/>
            <person name="Bentley D.R."/>
            <person name="Beck S."/>
            <person name="Rogers J."/>
            <person name="Dunham I."/>
        </authorList>
    </citation>
    <scope>NUCLEOTIDE SEQUENCE [LARGE SCALE GENOMIC DNA]</scope>
</reference>
<reference key="7">
    <citation type="submission" date="2005-07" db="EMBL/GenBank/DDBJ databases">
        <authorList>
            <person name="Mural R.J."/>
            <person name="Istrail S."/>
            <person name="Sutton G.G."/>
            <person name="Florea L."/>
            <person name="Halpern A.L."/>
            <person name="Mobarry C.M."/>
            <person name="Lippert R."/>
            <person name="Walenz B."/>
            <person name="Shatkay H."/>
            <person name="Dew I."/>
            <person name="Miller J.R."/>
            <person name="Flanigan M.J."/>
            <person name="Edwards N.J."/>
            <person name="Bolanos R."/>
            <person name="Fasulo D."/>
            <person name="Halldorsson B.V."/>
            <person name="Hannenhalli S."/>
            <person name="Turner R."/>
            <person name="Yooseph S."/>
            <person name="Lu F."/>
            <person name="Nusskern D.R."/>
            <person name="Shue B.C."/>
            <person name="Zheng X.H."/>
            <person name="Zhong F."/>
            <person name="Delcher A.L."/>
            <person name="Huson D.H."/>
            <person name="Kravitz S.A."/>
            <person name="Mouchard L."/>
            <person name="Reinert K."/>
            <person name="Remington K.A."/>
            <person name="Clark A.G."/>
            <person name="Waterman M.S."/>
            <person name="Eichler E.E."/>
            <person name="Adams M.D."/>
            <person name="Hunkapiller M.W."/>
            <person name="Myers E.W."/>
            <person name="Venter J.C."/>
        </authorList>
    </citation>
    <scope>NUCLEOTIDE SEQUENCE [LARGE SCALE GENOMIC DNA]</scope>
</reference>
<reference key="8">
    <citation type="journal article" date="2004" name="Genome Res.">
        <title>The status, quality, and expansion of the NIH full-length cDNA project: the Mammalian Gene Collection (MGC).</title>
        <authorList>
            <consortium name="The MGC Project Team"/>
        </authorList>
    </citation>
    <scope>NUCLEOTIDE SEQUENCE [LARGE SCALE MRNA] (ISOFORM 1)</scope>
    <source>
        <tissue>Chondrosarcoma</tissue>
        <tissue>Muscle</tissue>
    </source>
</reference>
<reference key="9">
    <citation type="journal article" date="2021" name="Mol. Genet. Genomic Med.">
        <title>Exome sequencing identifies a disease variant of the mitochondrial ATP-Mg/Pi carrier SLC25A25 in two families with kidney stones.</title>
        <authorList>
            <person name="Jabalameli M.R."/>
            <person name="Fitzpatrick F.M."/>
            <person name="Colombo R."/>
            <person name="Howles S.A."/>
            <person name="Leggatt G."/>
            <person name="Walker V."/>
            <person name="Wiberg A."/>
            <person name="Kunji E.R.S."/>
            <person name="Ennis S."/>
        </authorList>
    </citation>
    <scope>VARIANT HIS-315</scope>
    <scope>CHARACTERIZATION OF VARIANT HIS-315</scope>
    <scope>FUNCTION</scope>
    <scope>TRANSPORTER ACTIVITY</scope>
</reference>
<keyword id="KW-0025">Alternative splicing</keyword>
<keyword id="KW-0050">Antiport</keyword>
<keyword id="KW-0106">Calcium</keyword>
<keyword id="KW-0472">Membrane</keyword>
<keyword id="KW-0479">Metal-binding</keyword>
<keyword id="KW-0496">Mitochondrion</keyword>
<keyword id="KW-0999">Mitochondrion inner membrane</keyword>
<keyword id="KW-1267">Proteomics identification</keyword>
<keyword id="KW-1185">Reference proteome</keyword>
<keyword id="KW-0677">Repeat</keyword>
<keyword id="KW-0812">Transmembrane</keyword>
<keyword id="KW-1133">Transmembrane helix</keyword>
<keyword id="KW-0813">Transport</keyword>
<feature type="chain" id="PRO_0000317602" description="Mitochondrial adenyl nucleotide antiporter SLC25A25">
    <location>
        <begin position="1"/>
        <end position="469"/>
    </location>
</feature>
<feature type="topological domain" description="Mitochondrial intermembrane" evidence="14">
    <location>
        <begin position="1"/>
        <end position="189"/>
    </location>
</feature>
<feature type="transmembrane region" description="Helical; Name=1" evidence="2">
    <location>
        <begin position="190"/>
        <end position="207"/>
    </location>
</feature>
<feature type="topological domain" description="Mitochondrial matrix" evidence="14">
    <location>
        <begin position="208"/>
        <end position="244"/>
    </location>
</feature>
<feature type="transmembrane region" description="Helical; Name=2" evidence="2">
    <location>
        <begin position="245"/>
        <end position="264"/>
    </location>
</feature>
<feature type="topological domain" description="Mitochondrial intermembrane" evidence="14">
    <location>
        <begin position="265"/>
        <end position="287"/>
    </location>
</feature>
<feature type="transmembrane region" description="Helical; Name=3" evidence="2">
    <location>
        <begin position="288"/>
        <end position="301"/>
    </location>
</feature>
<feature type="topological domain" description="Mitochondrial matrix" evidence="14">
    <location>
        <begin position="302"/>
        <end position="337"/>
    </location>
</feature>
<feature type="transmembrane region" description="Helical; Name=4" evidence="2">
    <location>
        <begin position="338"/>
        <end position="357"/>
    </location>
</feature>
<feature type="topological domain" description="Mitochondrial intermembrane" evidence="14">
    <location>
        <begin position="358"/>
        <end position="380"/>
    </location>
</feature>
<feature type="transmembrane region" description="Helical; Name=5" evidence="2">
    <location>
        <begin position="381"/>
        <end position="398"/>
    </location>
</feature>
<feature type="topological domain" description="Mitochondrial matrix" evidence="14">
    <location>
        <begin position="399"/>
        <end position="437"/>
    </location>
</feature>
<feature type="transmembrane region" description="Helical; Name=6" evidence="2">
    <location>
        <begin position="438"/>
        <end position="457"/>
    </location>
</feature>
<feature type="topological domain" description="Mitochondrial intermembrane" evidence="14">
    <location>
        <begin position="458"/>
        <end position="469"/>
    </location>
</feature>
<feature type="domain" description="EF-hand 1" evidence="4">
    <location>
        <begin position="47"/>
        <end position="80"/>
    </location>
</feature>
<feature type="domain" description="EF-hand 2" evidence="4">
    <location>
        <begin position="78"/>
        <end position="113"/>
    </location>
</feature>
<feature type="domain" description="EF-hand 3" evidence="4">
    <location>
        <begin position="114"/>
        <end position="149"/>
    </location>
</feature>
<feature type="repeat" description="Solcar 1" evidence="3">
    <location>
        <begin position="184"/>
        <end position="270"/>
    </location>
</feature>
<feature type="repeat" description="Solcar 2" evidence="3">
    <location>
        <begin position="278"/>
        <end position="363"/>
    </location>
</feature>
<feature type="repeat" description="Solcar 3" evidence="3">
    <location>
        <begin position="375"/>
        <end position="463"/>
    </location>
</feature>
<feature type="region of interest" description="Regulatory N-terminal domain" evidence="1">
    <location>
        <begin position="1"/>
        <end position="165"/>
    </location>
</feature>
<feature type="region of interest" description="Linker region" evidence="1">
    <location>
        <begin position="151"/>
        <end position="160"/>
    </location>
</feature>
<feature type="region of interest" description="C-terminal transmembrane transporter domain" evidence="1">
    <location>
        <begin position="166"/>
        <end position="469"/>
    </location>
</feature>
<feature type="binding site" evidence="12">
    <location>
        <position position="60"/>
    </location>
    <ligand>
        <name>Ca(2+)</name>
        <dbReference type="ChEBI" id="CHEBI:29108"/>
    </ligand>
</feature>
<feature type="binding site" evidence="12">
    <location>
        <position position="62"/>
    </location>
    <ligand>
        <name>Ca(2+)</name>
        <dbReference type="ChEBI" id="CHEBI:29108"/>
    </ligand>
</feature>
<feature type="binding site" evidence="12">
    <location>
        <position position="64"/>
    </location>
    <ligand>
        <name>Ca(2+)</name>
        <dbReference type="ChEBI" id="CHEBI:29108"/>
    </ligand>
</feature>
<feature type="binding site" evidence="12">
    <location>
        <position position="66"/>
    </location>
    <ligand>
        <name>Ca(2+)</name>
        <dbReference type="ChEBI" id="CHEBI:29108"/>
    </ligand>
</feature>
<feature type="binding site" evidence="12">
    <location>
        <position position="71"/>
    </location>
    <ligand>
        <name>Ca(2+)</name>
        <dbReference type="ChEBI" id="CHEBI:29108"/>
    </ligand>
</feature>
<feature type="splice variant" id="VSP_031067" description="In isoform 6." evidence="10">
    <location>
        <begin position="1"/>
        <end position="103"/>
    </location>
</feature>
<feature type="splice variant" id="VSP_031068" description="In isoform 4 and isoform 5." evidence="8 10 11">
    <original>MLCLCLYVPVIGEAQTEFQYFESKGLPAELKSIFKLSVFIPSQEFSTYRQWKQ</original>
    <variation>MLQMLWHFLASFFPRAGCHGSREGDDREVRGTPAPAWRDQMASFLGKQDGRAEATEKRPTILLVVGPAEQFPK</variation>
    <location>
        <begin position="1"/>
        <end position="53"/>
    </location>
</feature>
<feature type="splice variant" id="VSP_031069" description="In isoform 2 and isoform 3." evidence="9 10">
    <original>MLCLCLYVPVIGEAQTEFQYFESKGLPAELKSIFKLSVFIPSQEFSTYRQWK</original>
    <variation>MVSSVLCRCVASPPPDAAATAASSSASSPASVGDPCGGAICGGPDHRLRLWRLFQTLDVNRDGGLCVNDLAVGLRRLGLHRTEGEL</variation>
    <location>
        <begin position="1"/>
        <end position="52"/>
    </location>
</feature>
<feature type="splice variant" id="VSP_031070" description="In isoform 3 and isoform 5." evidence="8">
    <original>S</original>
    <variation>RIRTGHFWGPVTY</variation>
    <location>
        <position position="125"/>
    </location>
</feature>
<feature type="sequence variant" id="VAR_087883" description="Found in patients with recurrent kidney stones formation; uncertain significance; no effect on protein abundance; no effect on stability; decreased adenyl nucleotide antiporter activity; no effect on transporter activity regulation by calcium; dbSNP:rs140777921." evidence="7">
    <original>Q</original>
    <variation>H</variation>
    <location>
        <position position="315"/>
    </location>
</feature>
<feature type="sequence conflict" description="In Ref. 4; AAQ88879." evidence="12" ref="4">
    <original>S</original>
    <variation>I</variation>
    <location>
        <position position="89"/>
    </location>
</feature>
<feature type="sequence conflict" description="In Ref. 8; AAH05163." evidence="12" ref="8">
    <original>T</original>
    <variation>Q</variation>
    <location>
        <position position="162"/>
    </location>
</feature>
<evidence type="ECO:0000250" key="1">
    <source>
        <dbReference type="UniProtKB" id="Q6NUK1"/>
    </source>
</evidence>
<evidence type="ECO:0000255" key="2"/>
<evidence type="ECO:0000255" key="3">
    <source>
        <dbReference type="PROSITE-ProRule" id="PRU00282"/>
    </source>
</evidence>
<evidence type="ECO:0000255" key="4">
    <source>
        <dbReference type="PROSITE-ProRule" id="PRU00448"/>
    </source>
</evidence>
<evidence type="ECO:0000269" key="5">
    <source>
    </source>
</evidence>
<evidence type="ECO:0000269" key="6">
    <source>
    </source>
</evidence>
<evidence type="ECO:0000269" key="7">
    <source>
    </source>
</evidence>
<evidence type="ECO:0000303" key="8">
    <source>
    </source>
</evidence>
<evidence type="ECO:0000303" key="9">
    <source>
    </source>
</evidence>
<evidence type="ECO:0000303" key="10">
    <source>
    </source>
</evidence>
<evidence type="ECO:0000303" key="11">
    <source>
    </source>
</evidence>
<evidence type="ECO:0000305" key="12"/>
<evidence type="ECO:0000305" key="13">
    <source>
    </source>
</evidence>
<evidence type="ECO:0000305" key="14">
    <source>
    </source>
</evidence>
<evidence type="ECO:0000305" key="15">
    <source>
    </source>
</evidence>
<evidence type="ECO:0000312" key="16">
    <source>
        <dbReference type="EMBL" id="BAB67789.1"/>
    </source>
</evidence>
<evidence type="ECO:0000312" key="17">
    <source>
        <dbReference type="HGNC" id="HGNC:20663"/>
    </source>
</evidence>
<protein>
    <recommendedName>
        <fullName evidence="14 15">Mitochondrial adenyl nucleotide antiporter SLC25A25</fullName>
    </recommendedName>
    <alternativeName>
        <fullName evidence="11">Mitochondrial ATP-Mg/Pi carrier protein 3</fullName>
    </alternativeName>
    <alternativeName>
        <fullName>Mitochondrial Ca(2+)-dependent solute carrier protein 3</fullName>
    </alternativeName>
    <alternativeName>
        <fullName evidence="10">Short calcium-binding mitochondrial carrier protein 2</fullName>
        <shortName evidence="10">SCaMC-2</shortName>
    </alternativeName>
    <alternativeName>
        <fullName evidence="17">Solute carrier family 25 member 25</fullName>
    </alternativeName>
</protein>
<name>SCMC2_HUMAN</name>
<accession>Q6KCM7</accession>
<accession>Q5SYW7</accession>
<accession>Q5SYW8</accession>
<accession>Q5SYX3</accession>
<accession>Q5VWU2</accession>
<accession>Q5VWU3</accession>
<accession>Q5VWU4</accession>
<accession>Q6KCM4</accession>
<accession>Q6KCM6</accession>
<accession>Q6UX48</accession>
<accession>Q705K2</accession>
<accession>Q96PZ1</accession>
<accession>Q9BSA6</accession>